<keyword id="KW-0560">Oxidoreductase</keyword>
<keyword id="KW-0819">tRNA processing</keyword>
<proteinExistence type="inferred from homology"/>
<evidence type="ECO:0000255" key="1">
    <source>
        <dbReference type="HAMAP-Rule" id="MF_00469"/>
    </source>
</evidence>
<comment type="function">
    <text evidence="1">Catalyzes oxygen-dependent 5-hydroxyuridine (ho5U) modification at position 34 in tRNAs.</text>
</comment>
<comment type="catalytic activity">
    <reaction evidence="1">
        <text>uridine(34) in tRNA + AH2 + O2 = 5-hydroxyuridine(34) in tRNA + A + H2O</text>
        <dbReference type="Rhea" id="RHEA:64224"/>
        <dbReference type="Rhea" id="RHEA-COMP:11727"/>
        <dbReference type="Rhea" id="RHEA-COMP:13381"/>
        <dbReference type="ChEBI" id="CHEBI:13193"/>
        <dbReference type="ChEBI" id="CHEBI:15377"/>
        <dbReference type="ChEBI" id="CHEBI:15379"/>
        <dbReference type="ChEBI" id="CHEBI:17499"/>
        <dbReference type="ChEBI" id="CHEBI:65315"/>
        <dbReference type="ChEBI" id="CHEBI:136877"/>
    </reaction>
</comment>
<comment type="similarity">
    <text evidence="1">Belongs to the TrhO family.</text>
</comment>
<name>TRHO_LISW6</name>
<gene>
    <name evidence="1" type="primary">trhO</name>
    <name type="ordered locus">lwe1400</name>
</gene>
<organism>
    <name type="scientific">Listeria welshimeri serovar 6b (strain ATCC 35897 / DSM 20650 / CCUG 15529 / CIP 8149 / NCTC 11857 / SLCC 5334 / V8)</name>
    <dbReference type="NCBI Taxonomy" id="386043"/>
    <lineage>
        <taxon>Bacteria</taxon>
        <taxon>Bacillati</taxon>
        <taxon>Bacillota</taxon>
        <taxon>Bacilli</taxon>
        <taxon>Bacillales</taxon>
        <taxon>Listeriaceae</taxon>
        <taxon>Listeria</taxon>
    </lineage>
</organism>
<reference key="1">
    <citation type="journal article" date="2006" name="J. Bacteriol.">
        <title>Whole-genome sequence of Listeria welshimeri reveals common steps in genome reduction with Listeria innocua as compared to Listeria monocytogenes.</title>
        <authorList>
            <person name="Hain T."/>
            <person name="Steinweg C."/>
            <person name="Kuenne C.T."/>
            <person name="Billion A."/>
            <person name="Ghai R."/>
            <person name="Chatterjee S.S."/>
            <person name="Domann E."/>
            <person name="Kaerst U."/>
            <person name="Goesmann A."/>
            <person name="Bekel T."/>
            <person name="Bartels D."/>
            <person name="Kaiser O."/>
            <person name="Meyer F."/>
            <person name="Puehler A."/>
            <person name="Weisshaar B."/>
            <person name="Wehland J."/>
            <person name="Liang C."/>
            <person name="Dandekar T."/>
            <person name="Lampidis R."/>
            <person name="Kreft J."/>
            <person name="Goebel W."/>
            <person name="Chakraborty T."/>
        </authorList>
    </citation>
    <scope>NUCLEOTIDE SEQUENCE [LARGE SCALE GENOMIC DNA]</scope>
    <source>
        <strain>ATCC 35897 / DSM 20650 / CCUG 15529 / CIP 8149 / NCTC 11857 / SLCC 5334 / V8</strain>
    </source>
</reference>
<sequence length="319" mass="36434">MSDYQVLLYYKYTTIDDPETFAKEHLAACKEMELKGRILVASEGINGTVSGTVEATNKYMDYMANDARFADMVFKIDAADSHAFKKMHVRPRAEIVSLSLEEDVNPLEVTGTYLEPTEFREALLDEDTVILDARNDYEFDIGHFRGAVRPDIQNFRELPGWIEENRDQLADKKIVTYCTGGIRCEKFSGWLKTAGFEDVSQLHGGIATYGKNEETKGELWDGQMYVFDERIAVPINQVNPTIVGKDYFDGTPCERYINCANPYCNKQILASIENEEKYLRSCSHECRVHPANLYTKELSKEEFTERLQAISETSPEMVQ</sequence>
<feature type="chain" id="PRO_1000013749" description="tRNA uridine(34) hydroxylase">
    <location>
        <begin position="1"/>
        <end position="319"/>
    </location>
</feature>
<feature type="domain" description="Rhodanese" evidence="1">
    <location>
        <begin position="124"/>
        <end position="218"/>
    </location>
</feature>
<feature type="active site" description="Cysteine persulfide intermediate" evidence="1">
    <location>
        <position position="178"/>
    </location>
</feature>
<protein>
    <recommendedName>
        <fullName evidence="1">tRNA uridine(34) hydroxylase</fullName>
        <ecNumber evidence="1">1.14.-.-</ecNumber>
    </recommendedName>
    <alternativeName>
        <fullName evidence="1">tRNA hydroxylation protein O</fullName>
    </alternativeName>
</protein>
<dbReference type="EC" id="1.14.-.-" evidence="1"/>
<dbReference type="EMBL" id="AM263198">
    <property type="protein sequence ID" value="CAK20818.1"/>
    <property type="molecule type" value="Genomic_DNA"/>
</dbReference>
<dbReference type="RefSeq" id="WP_011702196.1">
    <property type="nucleotide sequence ID" value="NC_008555.1"/>
</dbReference>
<dbReference type="SMR" id="A0AII6"/>
<dbReference type="STRING" id="386043.lwe1400"/>
<dbReference type="GeneID" id="61189276"/>
<dbReference type="KEGG" id="lwe:lwe1400"/>
<dbReference type="eggNOG" id="COG1054">
    <property type="taxonomic scope" value="Bacteria"/>
</dbReference>
<dbReference type="HOGENOM" id="CLU_038878_1_0_9"/>
<dbReference type="OrthoDB" id="9778326at2"/>
<dbReference type="Proteomes" id="UP000000779">
    <property type="component" value="Chromosome"/>
</dbReference>
<dbReference type="GO" id="GO:0016705">
    <property type="term" value="F:oxidoreductase activity, acting on paired donors, with incorporation or reduction of molecular oxygen"/>
    <property type="evidence" value="ECO:0007669"/>
    <property type="project" value="UniProtKB-UniRule"/>
</dbReference>
<dbReference type="GO" id="GO:0006400">
    <property type="term" value="P:tRNA modification"/>
    <property type="evidence" value="ECO:0007669"/>
    <property type="project" value="UniProtKB-UniRule"/>
</dbReference>
<dbReference type="CDD" id="cd01518">
    <property type="entry name" value="RHOD_YceA"/>
    <property type="match status" value="1"/>
</dbReference>
<dbReference type="Gene3D" id="3.30.70.100">
    <property type="match status" value="1"/>
</dbReference>
<dbReference type="Gene3D" id="3.40.250.10">
    <property type="entry name" value="Rhodanese-like domain"/>
    <property type="match status" value="1"/>
</dbReference>
<dbReference type="HAMAP" id="MF_00469">
    <property type="entry name" value="TrhO"/>
    <property type="match status" value="1"/>
</dbReference>
<dbReference type="InterPro" id="IPR001763">
    <property type="entry name" value="Rhodanese-like_dom"/>
</dbReference>
<dbReference type="InterPro" id="IPR036873">
    <property type="entry name" value="Rhodanese-like_dom_sf"/>
</dbReference>
<dbReference type="InterPro" id="IPR022111">
    <property type="entry name" value="Rhodanese_C"/>
</dbReference>
<dbReference type="InterPro" id="IPR020936">
    <property type="entry name" value="TrhO"/>
</dbReference>
<dbReference type="InterPro" id="IPR040503">
    <property type="entry name" value="TRHO_N"/>
</dbReference>
<dbReference type="NCBIfam" id="NF001135">
    <property type="entry name" value="PRK00142.1-3"/>
    <property type="match status" value="1"/>
</dbReference>
<dbReference type="PANTHER" id="PTHR43268:SF3">
    <property type="entry name" value="RHODANESE-LIKE DOMAIN-CONTAINING PROTEIN 7-RELATED"/>
    <property type="match status" value="1"/>
</dbReference>
<dbReference type="PANTHER" id="PTHR43268">
    <property type="entry name" value="THIOSULFATE SULFURTRANSFERASE/RHODANESE-LIKE DOMAIN-CONTAINING PROTEIN 2"/>
    <property type="match status" value="1"/>
</dbReference>
<dbReference type="Pfam" id="PF00581">
    <property type="entry name" value="Rhodanese"/>
    <property type="match status" value="1"/>
</dbReference>
<dbReference type="Pfam" id="PF12368">
    <property type="entry name" value="Rhodanese_C"/>
    <property type="match status" value="1"/>
</dbReference>
<dbReference type="Pfam" id="PF17773">
    <property type="entry name" value="UPF0176_N"/>
    <property type="match status" value="1"/>
</dbReference>
<dbReference type="SMART" id="SM00450">
    <property type="entry name" value="RHOD"/>
    <property type="match status" value="1"/>
</dbReference>
<dbReference type="SUPFAM" id="SSF52821">
    <property type="entry name" value="Rhodanese/Cell cycle control phosphatase"/>
    <property type="match status" value="1"/>
</dbReference>
<dbReference type="PROSITE" id="PS50206">
    <property type="entry name" value="RHODANESE_3"/>
    <property type="match status" value="1"/>
</dbReference>
<accession>A0AII6</accession>